<dbReference type="EMBL" id="AF241283">
    <property type="protein sequence ID" value="AAF82459.1"/>
    <property type="molecule type" value="Genomic_DNA"/>
</dbReference>
<dbReference type="SMR" id="Q9MS58"/>
<dbReference type="GO" id="GO:0009535">
    <property type="term" value="C:chloroplast thylakoid membrane"/>
    <property type="evidence" value="ECO:0007669"/>
    <property type="project" value="UniProtKB-SubCell"/>
</dbReference>
<dbReference type="GO" id="GO:0009539">
    <property type="term" value="C:photosystem II reaction center"/>
    <property type="evidence" value="ECO:0007669"/>
    <property type="project" value="InterPro"/>
</dbReference>
<dbReference type="GO" id="GO:0015979">
    <property type="term" value="P:photosynthesis"/>
    <property type="evidence" value="ECO:0007669"/>
    <property type="project" value="UniProtKB-UniRule"/>
</dbReference>
<dbReference type="HAMAP" id="MF_00441">
    <property type="entry name" value="PSII_PsbK"/>
    <property type="match status" value="1"/>
</dbReference>
<dbReference type="InterPro" id="IPR003687">
    <property type="entry name" value="PSII_PsbK"/>
</dbReference>
<dbReference type="InterPro" id="IPR037270">
    <property type="entry name" value="PSII_PsbK_sf"/>
</dbReference>
<dbReference type="NCBIfam" id="NF002715">
    <property type="entry name" value="PRK02553.1"/>
    <property type="match status" value="1"/>
</dbReference>
<dbReference type="PANTHER" id="PTHR35325">
    <property type="match status" value="1"/>
</dbReference>
<dbReference type="PANTHER" id="PTHR35325:SF1">
    <property type="entry name" value="PHOTOSYSTEM II REACTION CENTER PROTEIN K"/>
    <property type="match status" value="1"/>
</dbReference>
<dbReference type="Pfam" id="PF02533">
    <property type="entry name" value="PsbK"/>
    <property type="match status" value="1"/>
</dbReference>
<dbReference type="SUPFAM" id="SSF161037">
    <property type="entry name" value="Photosystem II reaction center protein K, PsbK"/>
    <property type="match status" value="1"/>
</dbReference>
<evidence type="ECO:0000255" key="1">
    <source>
        <dbReference type="HAMAP-Rule" id="MF_00441"/>
    </source>
</evidence>
<evidence type="ECO:0000305" key="2"/>
<proteinExistence type="inferred from homology"/>
<sequence length="54" mass="6220">MFQISLDMISNKINLLGLLPEAYAPFDHIVDVLPIIPILFFLLAFVWQASVKFR</sequence>
<reference key="1">
    <citation type="journal article" date="2001" name="Mol. Gen. Genet.">
        <title>Comparison of psbK operon organization and group III intron content in chloroplast genomes of 12 Euglenoid species.</title>
        <authorList>
            <person name="Doetsch N.A."/>
            <person name="Thompson M.D."/>
            <person name="Favreau M.R."/>
            <person name="Hallick R.B."/>
        </authorList>
    </citation>
    <scope>NUCLEOTIDE SEQUENCE [GENOMIC DNA]</scope>
</reference>
<gene>
    <name evidence="1" type="primary">psbK</name>
</gene>
<name>PSBK_EUGST</name>
<accession>Q9MS58</accession>
<comment type="function">
    <text evidence="1">One of the components of the core complex of photosystem II (PSII). PSII is a light-driven water:plastoquinone oxidoreductase that uses light energy to abstract electrons from H(2)O, generating O(2) and a proton gradient subsequently used for ATP formation. It consists of a core antenna complex that captures photons, and an electron transfer chain that converts photonic excitation into a charge separation.</text>
</comment>
<comment type="subunit">
    <text evidence="2">PSII is composed of 1 copy each of membrane proteins PsbA, PsbB, PsbC, PsbD, PsbE, PsbF, PsbH, PsbI, PsbJ, PsbK, PsbL, PsbM, PsbT, PsbY, PsbZ, Psb30/Ycf12, at least 3 peripheral proteins of the oxygen-evolving complex and a large number of cofactors. It forms dimeric complexes.</text>
</comment>
<comment type="subcellular location">
    <subcellularLocation>
        <location evidence="1">Plastid</location>
        <location evidence="1">Chloroplast thylakoid membrane</location>
        <topology evidence="1">Single-pass membrane protein</topology>
    </subcellularLocation>
</comment>
<comment type="similarity">
    <text evidence="1">Belongs to the PsbK family.</text>
</comment>
<organism>
    <name type="scientific">Euglena stellata</name>
    <dbReference type="NCBI Taxonomy" id="38278"/>
    <lineage>
        <taxon>Eukaryota</taxon>
        <taxon>Discoba</taxon>
        <taxon>Euglenozoa</taxon>
        <taxon>Euglenida</taxon>
        <taxon>Spirocuta</taxon>
        <taxon>Euglenophyceae</taxon>
        <taxon>Euglenales</taxon>
        <taxon>Euglenaceae</taxon>
        <taxon>Euglena</taxon>
    </lineage>
</organism>
<protein>
    <recommendedName>
        <fullName evidence="1">Photosystem II reaction center protein K</fullName>
        <shortName evidence="1">PSII-K</shortName>
    </recommendedName>
</protein>
<feature type="propeptide" id="PRO_0000029467" evidence="1">
    <location>
        <begin position="1"/>
        <end position="17"/>
    </location>
</feature>
<feature type="chain" id="PRO_0000029468" description="Photosystem II reaction center protein K" evidence="1">
    <location>
        <begin position="18"/>
        <end position="54"/>
    </location>
</feature>
<feature type="transmembrane region" description="Helical" evidence="1">
    <location>
        <begin position="29"/>
        <end position="49"/>
    </location>
</feature>
<geneLocation type="chloroplast"/>
<keyword id="KW-0150">Chloroplast</keyword>
<keyword id="KW-0472">Membrane</keyword>
<keyword id="KW-0602">Photosynthesis</keyword>
<keyword id="KW-0604">Photosystem II</keyword>
<keyword id="KW-0934">Plastid</keyword>
<keyword id="KW-0674">Reaction center</keyword>
<keyword id="KW-0793">Thylakoid</keyword>
<keyword id="KW-0812">Transmembrane</keyword>
<keyword id="KW-1133">Transmembrane helix</keyword>